<dbReference type="EMBL" id="AP009552">
    <property type="protein sequence ID" value="BAG05515.1"/>
    <property type="molecule type" value="Genomic_DNA"/>
</dbReference>
<dbReference type="RefSeq" id="WP_002762061.1">
    <property type="nucleotide sequence ID" value="NC_010296.1"/>
</dbReference>
<dbReference type="SMR" id="B0JHV3"/>
<dbReference type="STRING" id="449447.MAE_56930"/>
<dbReference type="PaxDb" id="449447-MAE_56930"/>
<dbReference type="EnsemblBacteria" id="BAG05515">
    <property type="protein sequence ID" value="BAG05515"/>
    <property type="gene ID" value="MAE_56930"/>
</dbReference>
<dbReference type="GeneID" id="66707854"/>
<dbReference type="KEGG" id="mar:MAE_56930"/>
<dbReference type="eggNOG" id="COG0231">
    <property type="taxonomic scope" value="Bacteria"/>
</dbReference>
<dbReference type="HOGENOM" id="CLU_074944_0_1_3"/>
<dbReference type="BioCyc" id="MAER449447:MAE_RS24800-MONOMER"/>
<dbReference type="UniPathway" id="UPA00345"/>
<dbReference type="Proteomes" id="UP000001510">
    <property type="component" value="Chromosome"/>
</dbReference>
<dbReference type="GO" id="GO:0005737">
    <property type="term" value="C:cytoplasm"/>
    <property type="evidence" value="ECO:0007669"/>
    <property type="project" value="UniProtKB-SubCell"/>
</dbReference>
<dbReference type="GO" id="GO:0003746">
    <property type="term" value="F:translation elongation factor activity"/>
    <property type="evidence" value="ECO:0007669"/>
    <property type="project" value="UniProtKB-UniRule"/>
</dbReference>
<dbReference type="GO" id="GO:0043043">
    <property type="term" value="P:peptide biosynthetic process"/>
    <property type="evidence" value="ECO:0007669"/>
    <property type="project" value="InterPro"/>
</dbReference>
<dbReference type="CDD" id="cd04470">
    <property type="entry name" value="S1_EF-P_repeat_1"/>
    <property type="match status" value="1"/>
</dbReference>
<dbReference type="CDD" id="cd05794">
    <property type="entry name" value="S1_EF-P_repeat_2"/>
    <property type="match status" value="1"/>
</dbReference>
<dbReference type="FunFam" id="2.30.30.30:FF:000003">
    <property type="entry name" value="Elongation factor P"/>
    <property type="match status" value="1"/>
</dbReference>
<dbReference type="FunFam" id="2.40.50.140:FF:000004">
    <property type="entry name" value="Elongation factor P"/>
    <property type="match status" value="1"/>
</dbReference>
<dbReference type="FunFam" id="2.40.50.140:FF:000009">
    <property type="entry name" value="Elongation factor P"/>
    <property type="match status" value="1"/>
</dbReference>
<dbReference type="Gene3D" id="2.30.30.30">
    <property type="match status" value="1"/>
</dbReference>
<dbReference type="Gene3D" id="2.40.50.140">
    <property type="entry name" value="Nucleic acid-binding proteins"/>
    <property type="match status" value="2"/>
</dbReference>
<dbReference type="HAMAP" id="MF_00141">
    <property type="entry name" value="EF_P"/>
    <property type="match status" value="1"/>
</dbReference>
<dbReference type="InterPro" id="IPR015365">
    <property type="entry name" value="Elong-fact-P_C"/>
</dbReference>
<dbReference type="InterPro" id="IPR012340">
    <property type="entry name" value="NA-bd_OB-fold"/>
</dbReference>
<dbReference type="InterPro" id="IPR014722">
    <property type="entry name" value="Rib_uL2_dom2"/>
</dbReference>
<dbReference type="InterPro" id="IPR020599">
    <property type="entry name" value="Transl_elong_fac_P/YeiP"/>
</dbReference>
<dbReference type="InterPro" id="IPR013185">
    <property type="entry name" value="Transl_elong_KOW-like"/>
</dbReference>
<dbReference type="InterPro" id="IPR001059">
    <property type="entry name" value="Transl_elong_P/YeiP_cen"/>
</dbReference>
<dbReference type="InterPro" id="IPR013852">
    <property type="entry name" value="Transl_elong_P/YeiP_CS"/>
</dbReference>
<dbReference type="InterPro" id="IPR011768">
    <property type="entry name" value="Transl_elongation_fac_P"/>
</dbReference>
<dbReference type="InterPro" id="IPR008991">
    <property type="entry name" value="Translation_prot_SH3-like_sf"/>
</dbReference>
<dbReference type="NCBIfam" id="TIGR00038">
    <property type="entry name" value="efp"/>
    <property type="match status" value="1"/>
</dbReference>
<dbReference type="NCBIfam" id="NF001810">
    <property type="entry name" value="PRK00529.1"/>
    <property type="match status" value="1"/>
</dbReference>
<dbReference type="PANTHER" id="PTHR30053">
    <property type="entry name" value="ELONGATION FACTOR P"/>
    <property type="match status" value="1"/>
</dbReference>
<dbReference type="PANTHER" id="PTHR30053:SF12">
    <property type="entry name" value="ELONGATION FACTOR P (EF-P) FAMILY PROTEIN"/>
    <property type="match status" value="1"/>
</dbReference>
<dbReference type="Pfam" id="PF01132">
    <property type="entry name" value="EFP"/>
    <property type="match status" value="1"/>
</dbReference>
<dbReference type="Pfam" id="PF08207">
    <property type="entry name" value="EFP_N"/>
    <property type="match status" value="1"/>
</dbReference>
<dbReference type="Pfam" id="PF09285">
    <property type="entry name" value="Elong-fact-P_C"/>
    <property type="match status" value="1"/>
</dbReference>
<dbReference type="PIRSF" id="PIRSF005901">
    <property type="entry name" value="EF-P"/>
    <property type="match status" value="1"/>
</dbReference>
<dbReference type="SMART" id="SM01185">
    <property type="entry name" value="EFP"/>
    <property type="match status" value="1"/>
</dbReference>
<dbReference type="SMART" id="SM00841">
    <property type="entry name" value="Elong-fact-P_C"/>
    <property type="match status" value="1"/>
</dbReference>
<dbReference type="SUPFAM" id="SSF50249">
    <property type="entry name" value="Nucleic acid-binding proteins"/>
    <property type="match status" value="2"/>
</dbReference>
<dbReference type="SUPFAM" id="SSF50104">
    <property type="entry name" value="Translation proteins SH3-like domain"/>
    <property type="match status" value="1"/>
</dbReference>
<dbReference type="PROSITE" id="PS01275">
    <property type="entry name" value="EFP"/>
    <property type="match status" value="1"/>
</dbReference>
<proteinExistence type="inferred from homology"/>
<name>EFP_MICAN</name>
<evidence type="ECO:0000255" key="1">
    <source>
        <dbReference type="HAMAP-Rule" id="MF_00141"/>
    </source>
</evidence>
<feature type="chain" id="PRO_1000076519" description="Elongation factor P">
    <location>
        <begin position="1"/>
        <end position="185"/>
    </location>
</feature>
<protein>
    <recommendedName>
        <fullName evidence="1">Elongation factor P</fullName>
        <shortName evidence="1">EF-P</shortName>
    </recommendedName>
</protein>
<comment type="function">
    <text evidence="1">Involved in peptide bond synthesis. Stimulates efficient translation and peptide-bond synthesis on native or reconstituted 70S ribosomes in vitro. Probably functions indirectly by altering the affinity of the ribosome for aminoacyl-tRNA, thus increasing their reactivity as acceptors for peptidyl transferase.</text>
</comment>
<comment type="pathway">
    <text evidence="1">Protein biosynthesis; polypeptide chain elongation.</text>
</comment>
<comment type="subcellular location">
    <subcellularLocation>
        <location evidence="1">Cytoplasm</location>
    </subcellularLocation>
</comment>
<comment type="similarity">
    <text evidence="1">Belongs to the elongation factor P family.</text>
</comment>
<reference key="1">
    <citation type="journal article" date="2007" name="DNA Res.">
        <title>Complete genomic structure of the bloom-forming toxic cyanobacterium Microcystis aeruginosa NIES-843.</title>
        <authorList>
            <person name="Kaneko T."/>
            <person name="Nakajima N."/>
            <person name="Okamoto S."/>
            <person name="Suzuki I."/>
            <person name="Tanabe Y."/>
            <person name="Tamaoki M."/>
            <person name="Nakamura Y."/>
            <person name="Kasai F."/>
            <person name="Watanabe A."/>
            <person name="Kawashima K."/>
            <person name="Kishida Y."/>
            <person name="Ono A."/>
            <person name="Shimizu Y."/>
            <person name="Takahashi C."/>
            <person name="Minami C."/>
            <person name="Fujishiro T."/>
            <person name="Kohara M."/>
            <person name="Katoh M."/>
            <person name="Nakazaki N."/>
            <person name="Nakayama S."/>
            <person name="Yamada M."/>
            <person name="Tabata S."/>
            <person name="Watanabe M.M."/>
        </authorList>
    </citation>
    <scope>NUCLEOTIDE SEQUENCE [LARGE SCALE GENOMIC DNA]</scope>
    <source>
        <strain>NIES-843 / IAM M-247</strain>
    </source>
</reference>
<organism>
    <name type="scientific">Microcystis aeruginosa (strain NIES-843 / IAM M-2473)</name>
    <dbReference type="NCBI Taxonomy" id="449447"/>
    <lineage>
        <taxon>Bacteria</taxon>
        <taxon>Bacillati</taxon>
        <taxon>Cyanobacteriota</taxon>
        <taxon>Cyanophyceae</taxon>
        <taxon>Oscillatoriophycideae</taxon>
        <taxon>Chroococcales</taxon>
        <taxon>Microcystaceae</taxon>
        <taxon>Microcystis</taxon>
    </lineage>
</organism>
<gene>
    <name evidence="1" type="primary">efp</name>
    <name type="ordered locus">MAE_56930</name>
</gene>
<accession>B0JHV3</accession>
<sequence length="185" mass="20566">MISSNDFRSGTTIEIDGSVWRVVEFLHVKPGKGSAFVRTKLKNVQTGNVVERTFRAGETLPSATIEKRTMQHTYKEGDQFVFMDMETFEEATLTPVQMGDRAKYLKEGMEVNILFWNDQVLDIELPTSVILEITDTDPGVKGDTATGGTKPAIVETGAQVMVPLFISIGERIKVDTRDGSYLGRE</sequence>
<keyword id="KW-0963">Cytoplasm</keyword>
<keyword id="KW-0251">Elongation factor</keyword>
<keyword id="KW-0648">Protein biosynthesis</keyword>